<feature type="initiator methionine" description="Removed" evidence="1">
    <location>
        <position position="1"/>
    </location>
</feature>
<feature type="chain" id="PRO_0000314783" description="Small nuclear ribonucleoprotein F">
    <location>
        <begin position="2"/>
        <end position="86"/>
    </location>
</feature>
<feature type="domain" description="Sm" evidence="2">
    <location>
        <begin position="6"/>
        <end position="78"/>
    </location>
</feature>
<feature type="modified residue" description="N-acetylserine" evidence="1">
    <location>
        <position position="2"/>
    </location>
</feature>
<organism>
    <name type="scientific">Bos taurus</name>
    <name type="common">Bovine</name>
    <dbReference type="NCBI Taxonomy" id="9913"/>
    <lineage>
        <taxon>Eukaryota</taxon>
        <taxon>Metazoa</taxon>
        <taxon>Chordata</taxon>
        <taxon>Craniata</taxon>
        <taxon>Vertebrata</taxon>
        <taxon>Euteleostomi</taxon>
        <taxon>Mammalia</taxon>
        <taxon>Eutheria</taxon>
        <taxon>Laurasiatheria</taxon>
        <taxon>Artiodactyla</taxon>
        <taxon>Ruminantia</taxon>
        <taxon>Pecora</taxon>
        <taxon>Bovidae</taxon>
        <taxon>Bovinae</taxon>
        <taxon>Bos</taxon>
    </lineage>
</organism>
<name>RUXF_BOVIN</name>
<dbReference type="EMBL" id="BC102192">
    <property type="protein sequence ID" value="AAI02193.1"/>
    <property type="status" value="ALT_INIT"/>
    <property type="molecule type" value="mRNA"/>
</dbReference>
<dbReference type="RefSeq" id="NP_001181956.1">
    <property type="nucleotide sequence ID" value="NM_001195027.1"/>
</dbReference>
<dbReference type="SMR" id="Q3T0Z8"/>
<dbReference type="FunCoup" id="Q3T0Z8">
    <property type="interactions" value="2843"/>
</dbReference>
<dbReference type="STRING" id="9913.ENSBTAP00000021643"/>
<dbReference type="PaxDb" id="9913-ENSBTAP00000021643"/>
<dbReference type="Ensembl" id="ENSBTAT00000021643.5">
    <property type="protein sequence ID" value="ENSBTAP00000021643.4"/>
    <property type="gene ID" value="ENSBTAG00000016271.6"/>
</dbReference>
<dbReference type="GeneID" id="615240"/>
<dbReference type="KEGG" id="bta:615240"/>
<dbReference type="CTD" id="6636"/>
<dbReference type="VEuPathDB" id="HostDB:ENSBTAG00000016271"/>
<dbReference type="VGNC" id="VGNC:35081">
    <property type="gene designation" value="SNRPF"/>
</dbReference>
<dbReference type="eggNOG" id="KOG3482">
    <property type="taxonomic scope" value="Eukaryota"/>
</dbReference>
<dbReference type="GeneTree" id="ENSGT00940000154818"/>
<dbReference type="HOGENOM" id="CLU_076902_12_1_1"/>
<dbReference type="InParanoid" id="Q3T0Z8"/>
<dbReference type="OMA" id="GYMNVQL"/>
<dbReference type="OrthoDB" id="9582814at2759"/>
<dbReference type="TreeFam" id="TF314481"/>
<dbReference type="Reactome" id="R-BTA-111367">
    <property type="pathway name" value="SLBP independent Processing of Histone Pre-mRNAs"/>
</dbReference>
<dbReference type="Reactome" id="R-BTA-191859">
    <property type="pathway name" value="snRNP Assembly"/>
</dbReference>
<dbReference type="Reactome" id="R-BTA-72163">
    <property type="pathway name" value="mRNA Splicing - Major Pathway"/>
</dbReference>
<dbReference type="Reactome" id="R-BTA-72165">
    <property type="pathway name" value="mRNA Splicing - Minor Pathway"/>
</dbReference>
<dbReference type="Reactome" id="R-BTA-73856">
    <property type="pathway name" value="RNA Polymerase II Transcription Termination"/>
</dbReference>
<dbReference type="Reactome" id="R-BTA-77588">
    <property type="pathway name" value="SLBP Dependent Processing of Replication-Dependent Histone Pre-mRNAs"/>
</dbReference>
<dbReference type="Proteomes" id="UP000009136">
    <property type="component" value="Chromosome 5"/>
</dbReference>
<dbReference type="Bgee" id="ENSBTAG00000016271">
    <property type="expression patterns" value="Expressed in oocyte and 105 other cell types or tissues"/>
</dbReference>
<dbReference type="GO" id="GO:0071013">
    <property type="term" value="C:catalytic step 2 spliceosome"/>
    <property type="evidence" value="ECO:0000318"/>
    <property type="project" value="GO_Central"/>
</dbReference>
<dbReference type="GO" id="GO:0005829">
    <property type="term" value="C:cytosol"/>
    <property type="evidence" value="ECO:0000250"/>
    <property type="project" value="UniProtKB"/>
</dbReference>
<dbReference type="GO" id="GO:0034709">
    <property type="term" value="C:methylosome"/>
    <property type="evidence" value="ECO:0000250"/>
    <property type="project" value="UniProtKB"/>
</dbReference>
<dbReference type="GO" id="GO:0005634">
    <property type="term" value="C:nucleus"/>
    <property type="evidence" value="ECO:0000250"/>
    <property type="project" value="UniProtKB"/>
</dbReference>
<dbReference type="GO" id="GO:0034715">
    <property type="term" value="C:pICln-Sm protein complex"/>
    <property type="evidence" value="ECO:0000250"/>
    <property type="project" value="UniProtKB"/>
</dbReference>
<dbReference type="GO" id="GO:0034719">
    <property type="term" value="C:SMN-Sm protein complex"/>
    <property type="evidence" value="ECO:0000250"/>
    <property type="project" value="UniProtKB"/>
</dbReference>
<dbReference type="GO" id="GO:0005685">
    <property type="term" value="C:U1 snRNP"/>
    <property type="evidence" value="ECO:0000250"/>
    <property type="project" value="UniProtKB"/>
</dbReference>
<dbReference type="GO" id="GO:0071007">
    <property type="term" value="C:U2-type catalytic step 2 spliceosome"/>
    <property type="evidence" value="ECO:0000250"/>
    <property type="project" value="UniProtKB"/>
</dbReference>
<dbReference type="GO" id="GO:0071005">
    <property type="term" value="C:U2-type precatalytic spliceosome"/>
    <property type="evidence" value="ECO:0000250"/>
    <property type="project" value="UniProtKB"/>
</dbReference>
<dbReference type="GO" id="GO:0005684">
    <property type="term" value="C:U2-type spliceosomal complex"/>
    <property type="evidence" value="ECO:0000250"/>
    <property type="project" value="UniProtKB"/>
</dbReference>
<dbReference type="GO" id="GO:0005687">
    <property type="term" value="C:U4 snRNP"/>
    <property type="evidence" value="ECO:0000250"/>
    <property type="project" value="UniProtKB"/>
</dbReference>
<dbReference type="GO" id="GO:0046540">
    <property type="term" value="C:U4/U6 x U5 tri-snRNP complex"/>
    <property type="evidence" value="ECO:0000250"/>
    <property type="project" value="UniProtKB"/>
</dbReference>
<dbReference type="GO" id="GO:0005683">
    <property type="term" value="C:U7 snRNP"/>
    <property type="evidence" value="ECO:0000250"/>
    <property type="project" value="UniProtKB"/>
</dbReference>
<dbReference type="GO" id="GO:0003723">
    <property type="term" value="F:RNA binding"/>
    <property type="evidence" value="ECO:0000318"/>
    <property type="project" value="GO_Central"/>
</dbReference>
<dbReference type="GO" id="GO:0000398">
    <property type="term" value="P:mRNA splicing, via spliceosome"/>
    <property type="evidence" value="ECO:0000250"/>
    <property type="project" value="UniProtKB"/>
</dbReference>
<dbReference type="GO" id="GO:0000387">
    <property type="term" value="P:spliceosomal snRNP assembly"/>
    <property type="evidence" value="ECO:0000250"/>
    <property type="project" value="UniProtKB"/>
</dbReference>
<dbReference type="CDD" id="cd01722">
    <property type="entry name" value="Sm_F"/>
    <property type="match status" value="1"/>
</dbReference>
<dbReference type="FunFam" id="2.30.30.100:FF:000133">
    <property type="entry name" value="Small nuclear ribonucleoprotein F"/>
    <property type="match status" value="1"/>
</dbReference>
<dbReference type="Gene3D" id="2.30.30.100">
    <property type="match status" value="1"/>
</dbReference>
<dbReference type="InterPro" id="IPR016487">
    <property type="entry name" value="Lsm6/sSmF"/>
</dbReference>
<dbReference type="InterPro" id="IPR010920">
    <property type="entry name" value="LSM_dom_sf"/>
</dbReference>
<dbReference type="InterPro" id="IPR047575">
    <property type="entry name" value="Sm"/>
</dbReference>
<dbReference type="InterPro" id="IPR001163">
    <property type="entry name" value="Sm_dom_euk/arc"/>
</dbReference>
<dbReference type="InterPro" id="IPR034100">
    <property type="entry name" value="Sm_F"/>
</dbReference>
<dbReference type="PANTHER" id="PTHR11021:SF0">
    <property type="entry name" value="SMALL NUCLEAR RIBONUCLEOPROTEIN F"/>
    <property type="match status" value="1"/>
</dbReference>
<dbReference type="PANTHER" id="PTHR11021">
    <property type="entry name" value="SMALL NUCLEAR RIBONUCLEOPROTEIN F SNRNP-F"/>
    <property type="match status" value="1"/>
</dbReference>
<dbReference type="Pfam" id="PF01423">
    <property type="entry name" value="LSM"/>
    <property type="match status" value="1"/>
</dbReference>
<dbReference type="PIRSF" id="PIRSF006609">
    <property type="entry name" value="snRNP_SmF"/>
    <property type="match status" value="1"/>
</dbReference>
<dbReference type="SMART" id="SM00651">
    <property type="entry name" value="Sm"/>
    <property type="match status" value="1"/>
</dbReference>
<dbReference type="SUPFAM" id="SSF50182">
    <property type="entry name" value="Sm-like ribonucleoproteins"/>
    <property type="match status" value="1"/>
</dbReference>
<dbReference type="PROSITE" id="PS52002">
    <property type="entry name" value="SM"/>
    <property type="match status" value="1"/>
</dbReference>
<gene>
    <name type="primary">SNRPF</name>
</gene>
<protein>
    <recommendedName>
        <fullName>Small nuclear ribonucleoprotein F</fullName>
        <shortName>snRNP-F</shortName>
    </recommendedName>
    <alternativeName>
        <fullName>Sm protein F</fullName>
        <shortName>Sm-F</shortName>
        <shortName>SmF</shortName>
    </alternativeName>
</protein>
<proteinExistence type="inferred from homology"/>
<keyword id="KW-0007">Acetylation</keyword>
<keyword id="KW-0963">Cytoplasm</keyword>
<keyword id="KW-0507">mRNA processing</keyword>
<keyword id="KW-0508">mRNA splicing</keyword>
<keyword id="KW-0539">Nucleus</keyword>
<keyword id="KW-1185">Reference proteome</keyword>
<keyword id="KW-0687">Ribonucleoprotein</keyword>
<keyword id="KW-0694">RNA-binding</keyword>
<keyword id="KW-0747">Spliceosome</keyword>
<reference key="1">
    <citation type="submission" date="2005-08" db="EMBL/GenBank/DDBJ databases">
        <authorList>
            <consortium name="NIH - Mammalian Gene Collection (MGC) project"/>
        </authorList>
    </citation>
    <scope>NUCLEOTIDE SEQUENCE [LARGE SCALE MRNA]</scope>
    <source>
        <strain>Crossbred X Angus</strain>
        <tissue>Ileum</tissue>
    </source>
</reference>
<accession>Q3T0Z8</accession>
<comment type="function">
    <text evidence="1">Plays a role in pre-mRNA splicing as core component of the SMN-Sm complex that mediates spliceosomal snRNP assembly and as component of the spliceosomal U1, U2, U4 and U5 small nuclear ribonucleoproteins (snRNPs), the building blocks of the spliceosome. Component of both the pre-catalytic spliceosome B complex and activated spliceosome C complexes. As a component of the minor spliceosome, involved in the splicing of U12-type introns in pre-mRNAs. As part of the U7 snRNP it is involved in histone 3'-end processing.</text>
</comment>
<comment type="subunit">
    <text evidence="1">Core component of the spliceosomal U1, U2, U4 and U5 small nuclear ribonucleoproteins (snRNPs), the building blocks of the spliceosome. Most spliceosomal snRNPs contain a common set of Sm proteins, SNRPB, SNRPD1, SNRPD2, SNRPD3, SNRPE, SNRPF and SNRPG that assemble in a heptameric protein ring on the Sm site of the small nuclear RNA to form the core snRNP. Component of the U1 snRNP. The U1 snRNP is composed of the U1 snRNA and the 7 core Sm proteins SNRPB, SNRPD1, SNRPD2, SNRPD3, SNRPE, SNRPF and SNRPG, and at least three U1 snRNP-specific proteins SNRNP70/U1-70K, SNRPA/U1-A and SNRPC/U1-C. Component of the U4/U6-U5 tri-snRNP complex composed of the U4, U6 and U5 snRNAs and at least PRPF3, PRPF4, PRPF6, PRPF8, PRPF31, SNRNP200, TXNL4A, SNRNP40, SNRPB, SNRPD1, SNRPD2, SNRPD3, SNRPE, SNRPF, SNRPG, DDX23, CD2BP2, PPIH, SNU13, EFTUD2, SART1 and USP39, plus LSM2, LSM3, LSM4, LSM5, LSM6, LSM7 and LSM8. Component of the U7 snRNP complex, or U7 Sm protein core complex, that is composed of the U7 snRNA and at least LSM10, LSM11, SNRPB, SNRPD3, SNRPE, SNRPF and SNRPG; the complex does not contain SNRPD1 and SNRPD2. Component of the minor spliceosome, which splices U12-type introns. Part of the SMN-Sm complex that contains SMN1, GEMIN2/SIP1, DDX20/GEMIN3, GEMIN4, GEMIN5, GEMIN6, GEMIN7, GEMIN8, STRAP/UNRIP and the Sm proteins SNRPB, SNRPD1, SNRPD2, SNRPD3, SNRPE, SNRPF and SNRPG; catalyzes core snRNPs assembly. Forms a 6S pICln-Sm complex composed of CLNS1A/pICln, SNRPD1, SNRPD2, SNRPE, SNRPF and SNRPG; ring-like structure where CLNS1A/pICln mimics additional Sm proteins and which is unable to assemble into the core snRNP. Interacts with GEMIN2 (via N-terminus); the interaction is direct. Interacts with SNRPD2; the interaction is direct. Interacts with SNRPE; the interaction is direct.</text>
</comment>
<comment type="subcellular location">
    <subcellularLocation>
        <location evidence="1">Cytoplasm</location>
        <location evidence="1">Cytosol</location>
    </subcellularLocation>
    <subcellularLocation>
        <location evidence="1">Nucleus</location>
    </subcellularLocation>
    <text evidence="1">SMN-mediated assembly into core snRNPs occurs in the cytosol before SMN-mediated transport to the nucleus to be included in spliceosomes.</text>
</comment>
<comment type="similarity">
    <text evidence="3">Belongs to the snRNP Sm proteins family. SmF/LSm6 subfamily.</text>
</comment>
<comment type="sequence caution" evidence="3">
    <conflict type="erroneous initiation">
        <sequence resource="EMBL-CDS" id="AAI02193"/>
    </conflict>
</comment>
<evidence type="ECO:0000250" key="1">
    <source>
        <dbReference type="UniProtKB" id="P62306"/>
    </source>
</evidence>
<evidence type="ECO:0000255" key="2">
    <source>
        <dbReference type="PROSITE-ProRule" id="PRU01346"/>
    </source>
</evidence>
<evidence type="ECO:0000305" key="3"/>
<sequence>MSLPLNPKPFLNGLTGKPVMVKLKWGMEYKGYLVSVDGYMNMQLANTEEYIDGALSGHLGEVLIRCNNVLYIRGVEEEEEDGEMRE</sequence>